<organism>
    <name type="scientific">Bacillus subtilis (strain 168)</name>
    <dbReference type="NCBI Taxonomy" id="224308"/>
    <lineage>
        <taxon>Bacteria</taxon>
        <taxon>Bacillati</taxon>
        <taxon>Bacillota</taxon>
        <taxon>Bacilli</taxon>
        <taxon>Bacillales</taxon>
        <taxon>Bacillaceae</taxon>
        <taxon>Bacillus</taxon>
    </lineage>
</organism>
<dbReference type="EC" id="5.4.99.5" evidence="4"/>
<dbReference type="EMBL" id="M32278">
    <property type="protein sequence ID" value="AAA22249.1"/>
    <property type="molecule type" value="Genomic_DNA"/>
</dbReference>
<dbReference type="EMBL" id="M80245">
    <property type="protein sequence ID" value="AAA20861.1"/>
    <property type="molecule type" value="Genomic_DNA"/>
</dbReference>
<dbReference type="EMBL" id="AL009126">
    <property type="protein sequence ID" value="CAB14185.1"/>
    <property type="molecule type" value="Genomic_DNA"/>
</dbReference>
<dbReference type="PIR" id="A33894">
    <property type="entry name" value="A33894"/>
</dbReference>
<dbReference type="RefSeq" id="NP_390150.1">
    <property type="nucleotide sequence ID" value="NC_000964.3"/>
</dbReference>
<dbReference type="RefSeq" id="WP_009967606.1">
    <property type="nucleotide sequence ID" value="NZ_OZ025638.1"/>
</dbReference>
<dbReference type="PDB" id="1COM">
    <property type="method" value="X-ray"/>
    <property type="resolution" value="2.20 A"/>
    <property type="chains" value="A/B/C/D/E/F/G/H/I/J/K/L=1-127"/>
</dbReference>
<dbReference type="PDB" id="1DBF">
    <property type="method" value="X-ray"/>
    <property type="resolution" value="1.30 A"/>
    <property type="chains" value="A/B/C=1-127"/>
</dbReference>
<dbReference type="PDB" id="1FNJ">
    <property type="method" value="X-ray"/>
    <property type="resolution" value="1.90 A"/>
    <property type="chains" value="A=1-127"/>
</dbReference>
<dbReference type="PDB" id="1FNK">
    <property type="method" value="X-ray"/>
    <property type="resolution" value="2.00 A"/>
    <property type="chains" value="A=1-127"/>
</dbReference>
<dbReference type="PDB" id="2CHS">
    <property type="method" value="X-ray"/>
    <property type="resolution" value="1.90 A"/>
    <property type="chains" value="A/B/C/D/E/F/G/H/I/J/K/L=1-127"/>
</dbReference>
<dbReference type="PDB" id="2CHT">
    <property type="method" value="X-ray"/>
    <property type="resolution" value="2.20 A"/>
    <property type="chains" value="A/B/C/D/E/F/G/H/I/J/K/L=1-127"/>
</dbReference>
<dbReference type="PDB" id="3ZO8">
    <property type="method" value="X-ray"/>
    <property type="resolution" value="1.59 A"/>
    <property type="chains" value="A/B/C/D/E/F=1-127"/>
</dbReference>
<dbReference type="PDB" id="3ZOP">
    <property type="method" value="X-ray"/>
    <property type="resolution" value="1.61 A"/>
    <property type="chains" value="A/B/C/D/E/F=1-127"/>
</dbReference>
<dbReference type="PDB" id="3ZP4">
    <property type="method" value="X-ray"/>
    <property type="resolution" value="1.80 A"/>
    <property type="chains" value="A/B/C/D/E/F=1-127"/>
</dbReference>
<dbReference type="PDB" id="3ZP7">
    <property type="method" value="X-ray"/>
    <property type="resolution" value="1.70 A"/>
    <property type="chains" value="A/B/C/D/E/F=1-127"/>
</dbReference>
<dbReference type="PDBsum" id="1COM"/>
<dbReference type="PDBsum" id="1DBF"/>
<dbReference type="PDBsum" id="1FNJ"/>
<dbReference type="PDBsum" id="1FNK"/>
<dbReference type="PDBsum" id="2CHS"/>
<dbReference type="PDBsum" id="2CHT"/>
<dbReference type="PDBsum" id="3ZO8"/>
<dbReference type="PDBsum" id="3ZOP"/>
<dbReference type="PDBsum" id="3ZP4"/>
<dbReference type="PDBsum" id="3ZP7"/>
<dbReference type="BMRB" id="P19080"/>
<dbReference type="SMR" id="P19080"/>
<dbReference type="FunCoup" id="P19080">
    <property type="interactions" value="122"/>
</dbReference>
<dbReference type="STRING" id="224308.BSU22690"/>
<dbReference type="DrugBank" id="DB02153">
    <property type="generic name" value="3-sulfino-L-alanine"/>
</dbReference>
<dbReference type="DrugBank" id="DB08648">
    <property type="generic name" value="8-Hydroxy-2-oxa-bicyclo[3.3.1]non-6-ene-3,5-dicarboxylic acid"/>
</dbReference>
<dbReference type="DrugBank" id="DB08427">
    <property type="generic name" value="Prephenic acid"/>
</dbReference>
<dbReference type="PaxDb" id="224308-BSU22690"/>
<dbReference type="EnsemblBacteria" id="CAB14185">
    <property type="protein sequence ID" value="CAB14185"/>
    <property type="gene ID" value="BSU_22690"/>
</dbReference>
<dbReference type="GeneID" id="939005"/>
<dbReference type="KEGG" id="bsu:BSU22690"/>
<dbReference type="PATRIC" id="fig|224308.179.peg.2473"/>
<dbReference type="eggNOG" id="COG4401">
    <property type="taxonomic scope" value="Bacteria"/>
</dbReference>
<dbReference type="InParanoid" id="P19080"/>
<dbReference type="OrthoDB" id="9802232at2"/>
<dbReference type="PhylomeDB" id="P19080"/>
<dbReference type="BioCyc" id="BSUB:BSU22690-MONOMER"/>
<dbReference type="BRENDA" id="5.4.99.5">
    <property type="organism ID" value="658"/>
</dbReference>
<dbReference type="SABIO-RK" id="P19080"/>
<dbReference type="UniPathway" id="UPA00120">
    <property type="reaction ID" value="UER00203"/>
</dbReference>
<dbReference type="EvolutionaryTrace" id="P19080"/>
<dbReference type="PRO" id="PR:P19080"/>
<dbReference type="Proteomes" id="UP000001570">
    <property type="component" value="Chromosome"/>
</dbReference>
<dbReference type="GO" id="GO:0005737">
    <property type="term" value="C:cytoplasm"/>
    <property type="evidence" value="ECO:0007669"/>
    <property type="project" value="UniProtKB-SubCell"/>
</dbReference>
<dbReference type="GO" id="GO:0004106">
    <property type="term" value="F:chorismate mutase activity"/>
    <property type="evidence" value="ECO:0000314"/>
    <property type="project" value="UniProtKB"/>
</dbReference>
<dbReference type="GO" id="GO:0008652">
    <property type="term" value="P:amino acid biosynthetic process"/>
    <property type="evidence" value="ECO:0007669"/>
    <property type="project" value="UniProtKB-KW"/>
</dbReference>
<dbReference type="GO" id="GO:0009073">
    <property type="term" value="P:aromatic amino acid family biosynthetic process"/>
    <property type="evidence" value="ECO:0007669"/>
    <property type="project" value="UniProtKB-KW"/>
</dbReference>
<dbReference type="GO" id="GO:0046417">
    <property type="term" value="P:chorismate metabolic process"/>
    <property type="evidence" value="ECO:0000314"/>
    <property type="project" value="UniProtKB"/>
</dbReference>
<dbReference type="CDD" id="cd02185">
    <property type="entry name" value="AroH"/>
    <property type="match status" value="1"/>
</dbReference>
<dbReference type="Gene3D" id="3.30.1330.40">
    <property type="entry name" value="RutC-like"/>
    <property type="match status" value="1"/>
</dbReference>
<dbReference type="InterPro" id="IPR008243">
    <property type="entry name" value="Chorismate_mutase_AroH"/>
</dbReference>
<dbReference type="InterPro" id="IPR035959">
    <property type="entry name" value="RutC-like_sf"/>
</dbReference>
<dbReference type="NCBIfam" id="TIGR01796">
    <property type="entry name" value="CM_mono_aroH"/>
    <property type="match status" value="1"/>
</dbReference>
<dbReference type="PANTHER" id="PTHR21164">
    <property type="entry name" value="CHORISMATE MUTASE"/>
    <property type="match status" value="1"/>
</dbReference>
<dbReference type="PANTHER" id="PTHR21164:SF0">
    <property type="entry name" value="CHORISMATE MUTASE AROH"/>
    <property type="match status" value="1"/>
</dbReference>
<dbReference type="Pfam" id="PF07736">
    <property type="entry name" value="CM_1"/>
    <property type="match status" value="1"/>
</dbReference>
<dbReference type="PIRSF" id="PIRSF005965">
    <property type="entry name" value="Chor_mut_AroH"/>
    <property type="match status" value="1"/>
</dbReference>
<dbReference type="SUPFAM" id="SSF55298">
    <property type="entry name" value="YjgF-like"/>
    <property type="match status" value="1"/>
</dbReference>
<dbReference type="PROSITE" id="PS51167">
    <property type="entry name" value="CHORISMATE_MUT_1"/>
    <property type="match status" value="1"/>
</dbReference>
<comment type="function">
    <text evidence="4">Catalyzes the Claisen rearrangement of chorismate to prephenate. Probably involved in the aromatic amino acid biosynthesis.</text>
</comment>
<comment type="catalytic activity">
    <reaction evidence="4">
        <text>chorismate = prephenate</text>
        <dbReference type="Rhea" id="RHEA:13897"/>
        <dbReference type="ChEBI" id="CHEBI:29748"/>
        <dbReference type="ChEBI" id="CHEBI:29934"/>
        <dbReference type="EC" id="5.4.99.5"/>
    </reaction>
    <physiologicalReaction direction="left-to-right" evidence="4">
        <dbReference type="Rhea" id="RHEA:13898"/>
    </physiologicalReaction>
</comment>
<comment type="biophysicochemical properties">
    <kinetics>
        <KM evidence="3">67 uM for chorismate (at pH 7.5 and at 30 degrees Celsius)</KM>
        <KM evidence="7">87 uM for chorismate (at pH 7.5 and at 30 degrees Celsius)</KM>
        <KM evidence="4">100 uM for chorismate (at pH 7.5 and at 30 degrees Celsius)</KM>
    </kinetics>
</comment>
<comment type="pathway">
    <text>Metabolic intermediate biosynthesis; prephenate biosynthesis; prephenate from chorismate: step 1/1.</text>
</comment>
<comment type="subunit">
    <text evidence="2 5 6">Homotrimer.</text>
</comment>
<comment type="subcellular location">
    <subcellularLocation>
        <location evidence="10">Cytoplasm</location>
    </subcellularLocation>
</comment>
<comment type="miscellaneous">
    <text>This enzyme is monofunctional, and its activity is unaffected by the end-product aromatic amino acids.</text>
</comment>
<gene>
    <name evidence="9" type="primary">aroH</name>
    <name type="ordered locus">BSU22690</name>
</gene>
<proteinExistence type="evidence at protein level"/>
<keyword id="KW-0002">3D-structure</keyword>
<keyword id="KW-0028">Amino-acid biosynthesis</keyword>
<keyword id="KW-0057">Aromatic amino acid biosynthesis</keyword>
<keyword id="KW-0963">Cytoplasm</keyword>
<keyword id="KW-0903">Direct protein sequencing</keyword>
<keyword id="KW-0413">Isomerase</keyword>
<keyword id="KW-1185">Reference proteome</keyword>
<name>AROH_BACSU</name>
<feature type="chain" id="PRO_0000119203" description="Chorismate mutase AroH">
    <location>
        <begin position="1"/>
        <end position="127"/>
    </location>
</feature>
<feature type="domain" description="Chorismate mutase aroH-type" evidence="1">
    <location>
        <begin position="3"/>
        <end position="121"/>
    </location>
</feature>
<feature type="binding site" evidence="5 11">
    <location>
        <position position="7"/>
    </location>
    <ligand>
        <name>prephenate</name>
        <dbReference type="ChEBI" id="CHEBI:29934"/>
    </ligand>
</feature>
<feature type="binding site" evidence="5 11">
    <location>
        <begin position="74"/>
        <end position="78"/>
    </location>
    <ligand>
        <name>prephenate</name>
        <dbReference type="ChEBI" id="CHEBI:29934"/>
    </ligand>
</feature>
<feature type="binding site" evidence="5 11">
    <location>
        <position position="90"/>
    </location>
    <ligand>
        <name>prephenate</name>
        <dbReference type="ChEBI" id="CHEBI:29934"/>
    </ligand>
</feature>
<feature type="binding site" evidence="5 11">
    <location>
        <position position="108"/>
    </location>
    <ligand>
        <name>prephenate</name>
        <dbReference type="ChEBI" id="CHEBI:29934"/>
    </ligand>
</feature>
<feature type="mutagenesis site" description="No chorismate mutase activity." evidence="8">
    <original>E</original>
    <variation>A</variation>
    <location>
        <position position="78"/>
    </location>
</feature>
<feature type="mutagenesis site" description="No chorismate mutase activity." evidence="3">
    <original>R</original>
    <variation>A</variation>
    <location>
        <position position="90"/>
    </location>
</feature>
<feature type="mutagenesis site" description="2-fold decrease in affinity and very low decrease in catalytic efficiency." evidence="3">
    <original>R</original>
    <variation>G</variation>
    <location>
        <position position="90"/>
    </location>
</feature>
<feature type="mutagenesis site" description="Low decrease in catalytic efficiency and in affinity." evidence="3">
    <original>R</original>
    <variation>K</variation>
    <location>
        <position position="90"/>
    </location>
</feature>
<feature type="sequence conflict" description="In Ref. 1; AAA22249." evidence="10" ref="1">
    <original>V</original>
    <variation>A</variation>
    <location>
        <position position="112"/>
    </location>
</feature>
<feature type="strand" evidence="15">
    <location>
        <begin position="2"/>
        <end position="11"/>
    </location>
</feature>
<feature type="strand" evidence="17">
    <location>
        <begin position="13"/>
        <end position="15"/>
    </location>
</feature>
<feature type="helix" evidence="15">
    <location>
        <begin position="17"/>
        <end position="35"/>
    </location>
</feature>
<feature type="helix" evidence="15">
    <location>
        <begin position="39"/>
        <end position="41"/>
    </location>
</feature>
<feature type="strand" evidence="15">
    <location>
        <begin position="42"/>
        <end position="49"/>
    </location>
</feature>
<feature type="helix" evidence="15">
    <location>
        <begin position="59"/>
        <end position="63"/>
    </location>
</feature>
<feature type="strand" evidence="16">
    <location>
        <begin position="65"/>
        <end position="67"/>
    </location>
</feature>
<feature type="strand" evidence="15">
    <location>
        <begin position="73"/>
        <end position="77"/>
    </location>
</feature>
<feature type="strand" evidence="15">
    <location>
        <begin position="86"/>
        <end position="97"/>
    </location>
</feature>
<feature type="helix" evidence="15">
    <location>
        <begin position="101"/>
        <end position="103"/>
    </location>
</feature>
<feature type="helix" evidence="15">
    <location>
        <begin position="110"/>
        <end position="115"/>
    </location>
</feature>
<feature type="helix" evidence="15">
    <location>
        <begin position="121"/>
        <end position="124"/>
    </location>
</feature>
<protein>
    <recommendedName>
        <fullName>Chorismate mutase AroH</fullName>
        <shortName>CM</shortName>
        <ecNumber evidence="4">5.4.99.5</ecNumber>
    </recommendedName>
</protein>
<reference key="1">
    <citation type="journal article" date="1990" name="Biochemistry">
        <title>Monofunctional chorismate mutase from Bacillus subtilis: purification of the protein, molecular cloning of the gene, and overexpression of the gene product in Escherichia coli.</title>
        <authorList>
            <person name="Gray J.V."/>
            <person name="Golinelli-Pimpaneau B."/>
            <person name="Knowles J.R."/>
        </authorList>
    </citation>
    <scope>NUCLEOTIDE SEQUENCE [GENOMIC DNA]</scope>
    <scope>PROTEIN SEQUENCE OF 1-35</scope>
    <scope>FUNCTION AS A CHORISMATE MUTASE</scope>
    <scope>CATALYTIC ACTIVITY</scope>
    <scope>BIOPHYSICOCHEMICAL PROPERTIES</scope>
    <source>
        <strain>168 / Marburg / ATCC 6051 / DSM 10 / JCM 1465 / NBRC 13719 / NCIMB 3610 / NRRL NRS-744 / VKM B-501</strain>
    </source>
</reference>
<reference key="2">
    <citation type="submission" date="1992-01" db="EMBL/GenBank/DDBJ databases">
        <title>Sequence of Bacillus subtilis dbpA, mtr(A,B), gerC(1-3), ndk, cheR, aro(B,E,F,H), trp(A-F), hisH, and tyrA genes.</title>
        <authorList>
            <person name="Henner D.J."/>
        </authorList>
    </citation>
    <scope>NUCLEOTIDE SEQUENCE [GENOMIC DNA]</scope>
</reference>
<reference key="3">
    <citation type="journal article" date="1997" name="Nature">
        <title>The complete genome sequence of the Gram-positive bacterium Bacillus subtilis.</title>
        <authorList>
            <person name="Kunst F."/>
            <person name="Ogasawara N."/>
            <person name="Moszer I."/>
            <person name="Albertini A.M."/>
            <person name="Alloni G."/>
            <person name="Azevedo V."/>
            <person name="Bertero M.G."/>
            <person name="Bessieres P."/>
            <person name="Bolotin A."/>
            <person name="Borchert S."/>
            <person name="Borriss R."/>
            <person name="Boursier L."/>
            <person name="Brans A."/>
            <person name="Braun M."/>
            <person name="Brignell S.C."/>
            <person name="Bron S."/>
            <person name="Brouillet S."/>
            <person name="Bruschi C.V."/>
            <person name="Caldwell B."/>
            <person name="Capuano V."/>
            <person name="Carter N.M."/>
            <person name="Choi S.-K."/>
            <person name="Codani J.-J."/>
            <person name="Connerton I.F."/>
            <person name="Cummings N.J."/>
            <person name="Daniel R.A."/>
            <person name="Denizot F."/>
            <person name="Devine K.M."/>
            <person name="Duesterhoeft A."/>
            <person name="Ehrlich S.D."/>
            <person name="Emmerson P.T."/>
            <person name="Entian K.-D."/>
            <person name="Errington J."/>
            <person name="Fabret C."/>
            <person name="Ferrari E."/>
            <person name="Foulger D."/>
            <person name="Fritz C."/>
            <person name="Fujita M."/>
            <person name="Fujita Y."/>
            <person name="Fuma S."/>
            <person name="Galizzi A."/>
            <person name="Galleron N."/>
            <person name="Ghim S.-Y."/>
            <person name="Glaser P."/>
            <person name="Goffeau A."/>
            <person name="Golightly E.J."/>
            <person name="Grandi G."/>
            <person name="Guiseppi G."/>
            <person name="Guy B.J."/>
            <person name="Haga K."/>
            <person name="Haiech J."/>
            <person name="Harwood C.R."/>
            <person name="Henaut A."/>
            <person name="Hilbert H."/>
            <person name="Holsappel S."/>
            <person name="Hosono S."/>
            <person name="Hullo M.-F."/>
            <person name="Itaya M."/>
            <person name="Jones L.-M."/>
            <person name="Joris B."/>
            <person name="Karamata D."/>
            <person name="Kasahara Y."/>
            <person name="Klaerr-Blanchard M."/>
            <person name="Klein C."/>
            <person name="Kobayashi Y."/>
            <person name="Koetter P."/>
            <person name="Koningstein G."/>
            <person name="Krogh S."/>
            <person name="Kumano M."/>
            <person name="Kurita K."/>
            <person name="Lapidus A."/>
            <person name="Lardinois S."/>
            <person name="Lauber J."/>
            <person name="Lazarevic V."/>
            <person name="Lee S.-M."/>
            <person name="Levine A."/>
            <person name="Liu H."/>
            <person name="Masuda S."/>
            <person name="Mauel C."/>
            <person name="Medigue C."/>
            <person name="Medina N."/>
            <person name="Mellado R.P."/>
            <person name="Mizuno M."/>
            <person name="Moestl D."/>
            <person name="Nakai S."/>
            <person name="Noback M."/>
            <person name="Noone D."/>
            <person name="O'Reilly M."/>
            <person name="Ogawa K."/>
            <person name="Ogiwara A."/>
            <person name="Oudega B."/>
            <person name="Park S.-H."/>
            <person name="Parro V."/>
            <person name="Pohl T.M."/>
            <person name="Portetelle D."/>
            <person name="Porwollik S."/>
            <person name="Prescott A.M."/>
            <person name="Presecan E."/>
            <person name="Pujic P."/>
            <person name="Purnelle B."/>
            <person name="Rapoport G."/>
            <person name="Rey M."/>
            <person name="Reynolds S."/>
            <person name="Rieger M."/>
            <person name="Rivolta C."/>
            <person name="Rocha E."/>
            <person name="Roche B."/>
            <person name="Rose M."/>
            <person name="Sadaie Y."/>
            <person name="Sato T."/>
            <person name="Scanlan E."/>
            <person name="Schleich S."/>
            <person name="Schroeter R."/>
            <person name="Scoffone F."/>
            <person name="Sekiguchi J."/>
            <person name="Sekowska A."/>
            <person name="Seror S.J."/>
            <person name="Serror P."/>
            <person name="Shin B.-S."/>
            <person name="Soldo B."/>
            <person name="Sorokin A."/>
            <person name="Tacconi E."/>
            <person name="Takagi T."/>
            <person name="Takahashi H."/>
            <person name="Takemaru K."/>
            <person name="Takeuchi M."/>
            <person name="Tamakoshi A."/>
            <person name="Tanaka T."/>
            <person name="Terpstra P."/>
            <person name="Tognoni A."/>
            <person name="Tosato V."/>
            <person name="Uchiyama S."/>
            <person name="Vandenbol M."/>
            <person name="Vannier F."/>
            <person name="Vassarotti A."/>
            <person name="Viari A."/>
            <person name="Wambutt R."/>
            <person name="Wedler E."/>
            <person name="Wedler H."/>
            <person name="Weitzenegger T."/>
            <person name="Winters P."/>
            <person name="Wipat A."/>
            <person name="Yamamoto H."/>
            <person name="Yamane K."/>
            <person name="Yasumoto K."/>
            <person name="Yata K."/>
            <person name="Yoshida K."/>
            <person name="Yoshikawa H.-F."/>
            <person name="Zumstein E."/>
            <person name="Yoshikawa H."/>
            <person name="Danchin A."/>
        </authorList>
    </citation>
    <scope>NUCLEOTIDE SEQUENCE [LARGE SCALE GENOMIC DNA]</scope>
    <source>
        <strain>168</strain>
    </source>
</reference>
<reference key="4">
    <citation type="journal article" date="1996" name="J. Am. Chem. Soc.">
        <title>Mutagenesis study of active site residues in chorismate mutase from Bacillus subtilis.</title>
        <authorList>
            <person name="Cload S.T."/>
            <person name="Liu D.R."/>
            <person name="Pastor R.M."/>
            <person name="Schultz P.G."/>
        </authorList>
    </citation>
    <scope>MUTAGENESIS</scope>
    <scope>BIOPHYSICOCHEMICAL PROPERTIES</scope>
</reference>
<reference key="5">
    <citation type="journal article" date="1996" name="J. Am. Chem. Soc.">
        <title>Electrostatic catalysis of the Claisen rearrangement: probing the role of Glu78 in Bacillus subtilis chorismate mutase by genetic selection.</title>
        <authorList>
            <person name="Kast P."/>
            <person name="Hartgerink J.D."/>
            <person name="Asif-Ullah M."/>
            <person name="Hilvert D."/>
        </authorList>
    </citation>
    <scope>MUTAGENESIS OF GLU-78</scope>
</reference>
<reference key="6">
    <citation type="journal article" date="1993" name="Biochemistry">
        <title>13C NMR studies of the enzyme-product complex of Bacillus subtilis chorismate mutase.</title>
        <authorList>
            <person name="Rajagopalan J.S."/>
            <person name="Taylor K.M."/>
            <person name="Jaffe E.K."/>
        </authorList>
    </citation>
    <scope>STRUCTURE BY NMR</scope>
</reference>
<reference key="7">
    <citation type="journal article" date="1993" name="Proc. Natl. Acad. Sci. U.S.A.">
        <title>Crystal structures of the monofunctional chorismate mutase from Bacillus subtilis and its complex with a transition state analog.</title>
        <authorList>
            <person name="Chook Y.M."/>
            <person name="Ke H."/>
            <person name="Lipscomb W.N."/>
        </authorList>
    </citation>
    <scope>X-RAY CRYSTALLOGRAPHY (1.9 ANGSTROMS)</scope>
    <scope>SUBUNIT</scope>
</reference>
<reference evidence="11" key="8">
    <citation type="journal article" date="1994" name="J. Mol. Biol.">
        <title>The monofunctional chorismate mutase from Bacillus subtilis. Structure determination of chorismate mutase and its complexes with a transition state analog and prephenate, and implications for the mechanism of the enzymatic reaction.</title>
        <authorList>
            <person name="Chook Y.M."/>
            <person name="Gray J.V."/>
            <person name="Ke H."/>
            <person name="Lipscomb W.N."/>
        </authorList>
    </citation>
    <scope>X-RAY CRYSTALLOGRAPHY (2.2 ANGSTROMS) IN COMPLEX WITH PREPHENATE</scope>
    <scope>SUBUNIT</scope>
</reference>
<reference evidence="12" key="9">
    <citation type="journal article" date="2000" name="Acta Crystallogr. D">
        <title>The 1.30 A resolution structure of the Bacillus subtilis chorismate mutase catalytic homotrimer.</title>
        <authorList>
            <person name="Ladner J.E."/>
            <person name="Reddy P."/>
            <person name="Davis A."/>
            <person name="Tordova M."/>
            <person name="Howard A.J."/>
            <person name="Gilliland G.L."/>
        </authorList>
    </citation>
    <scope>X-RAY CRYSTALLOGRAPHY (1.3 ANGSTROMS)</scope>
    <scope>SUBUNIT</scope>
</reference>
<reference evidence="13 14" key="10">
    <citation type="journal article" date="2000" name="J. Biol. Chem.">
        <title>A strategically positioned cation is crucial for efficient catalysis by chorismate mutase.</title>
        <authorList>
            <person name="Kast P."/>
            <person name="Grisostomi C."/>
            <person name="Chen I.A."/>
            <person name="Li S."/>
            <person name="Krengel U."/>
            <person name="Xue Y."/>
            <person name="Hilvert D."/>
        </authorList>
    </citation>
    <scope>X-RAY CRYSTALLOGRAPHY (1.9 ANGSTROMS) OF MUTANT SER-88/LYS-90 AND LYS-88/SER-90</scope>
    <scope>MUTAGENESIS OF ARG-90</scope>
    <scope>BIOPHYSICOCHEMICAL PROPERTIES</scope>
</reference>
<sequence length="127" mass="14517">MMIRGIRGATTVERDTEEEILQKTKQLLEKIIEENHTKPEDVVQMLLSATPDLHAVFPAKAVRELSGWQYVPVTCMQEMDVTGGLKKCIRVMMTVQTDVPQDQIRHVYLEKVVVLRPDLSLTKNTEL</sequence>
<evidence type="ECO:0000255" key="1">
    <source>
        <dbReference type="PROSITE-ProRule" id="PRU00514"/>
    </source>
</evidence>
<evidence type="ECO:0000269" key="2">
    <source>
    </source>
</evidence>
<evidence type="ECO:0000269" key="3">
    <source>
    </source>
</evidence>
<evidence type="ECO:0000269" key="4">
    <source>
    </source>
</evidence>
<evidence type="ECO:0000269" key="5">
    <source>
    </source>
</evidence>
<evidence type="ECO:0000269" key="6">
    <source>
    </source>
</evidence>
<evidence type="ECO:0000269" key="7">
    <source ref="4"/>
</evidence>
<evidence type="ECO:0000269" key="8">
    <source ref="5"/>
</evidence>
<evidence type="ECO:0000303" key="9">
    <source>
    </source>
</evidence>
<evidence type="ECO:0000305" key="10"/>
<evidence type="ECO:0007744" key="11">
    <source>
        <dbReference type="PDB" id="1COM"/>
    </source>
</evidence>
<evidence type="ECO:0007744" key="12">
    <source>
        <dbReference type="PDB" id="1DBF"/>
    </source>
</evidence>
<evidence type="ECO:0007744" key="13">
    <source>
        <dbReference type="PDB" id="1FNJ"/>
    </source>
</evidence>
<evidence type="ECO:0007744" key="14">
    <source>
        <dbReference type="PDB" id="1FNK"/>
    </source>
</evidence>
<evidence type="ECO:0007829" key="15">
    <source>
        <dbReference type="PDB" id="1DBF"/>
    </source>
</evidence>
<evidence type="ECO:0007829" key="16">
    <source>
        <dbReference type="PDB" id="1FNJ"/>
    </source>
</evidence>
<evidence type="ECO:0007829" key="17">
    <source>
        <dbReference type="PDB" id="2CHS"/>
    </source>
</evidence>
<accession>P19080</accession>